<organism>
    <name type="scientific">Ephedra distachya</name>
    <name type="common">Joint-fir</name>
    <name type="synonym">Ephedra vulgaris</name>
    <dbReference type="NCBI Taxonomy" id="3389"/>
    <lineage>
        <taxon>Eukaryota</taxon>
        <taxon>Viridiplantae</taxon>
        <taxon>Streptophyta</taxon>
        <taxon>Embryophyta</taxon>
        <taxon>Tracheophyta</taxon>
        <taxon>Spermatophyta</taxon>
        <taxon>Gnetopsida</taxon>
        <taxon>Gnetidae</taxon>
        <taxon>Ephedrales</taxon>
        <taxon>Ephedraceae</taxon>
        <taxon>Ephedra</taxon>
    </lineage>
</organism>
<protein>
    <recommendedName>
        <fullName>Unknown protein 2</fullName>
    </recommendedName>
</protein>
<feature type="chain" id="PRO_0000326441" description="Unknown protein 2">
    <location>
        <begin position="1" status="less than"/>
        <end position="11" status="greater than"/>
    </location>
</feature>
<feature type="unsure residue" description="L or I" evidence="1">
    <location>
        <position position="3"/>
    </location>
</feature>
<feature type="unsure residue" description="F or M" evidence="1">
    <location>
        <position position="9"/>
    </location>
</feature>
<feature type="non-terminal residue" evidence="2">
    <location>
        <position position="1"/>
    </location>
</feature>
<feature type="non-terminal residue" evidence="2">
    <location>
        <position position="11"/>
    </location>
</feature>
<name>UP02_EPHDI</name>
<keyword id="KW-0134">Cell wall</keyword>
<keyword id="KW-0903">Direct protein sequencing</keyword>
<keyword id="KW-0964">Secreted</keyword>
<proteinExistence type="evidence at protein level"/>
<accession>P85495</accession>
<sequence>DPLGSTEEFSR</sequence>
<dbReference type="GO" id="GO:0005576">
    <property type="term" value="C:extracellular region"/>
    <property type="evidence" value="ECO:0007669"/>
    <property type="project" value="UniProtKB-KW"/>
</dbReference>
<comment type="subcellular location">
    <subcellularLocation>
        <location evidence="1">Secreted</location>
        <location evidence="1">Cell wall</location>
    </subcellularLocation>
</comment>
<evidence type="ECO:0000269" key="1">
    <source>
    </source>
</evidence>
<evidence type="ECO:0000303" key="2">
    <source>
    </source>
</evidence>
<evidence type="ECO:0000305" key="3"/>
<reference evidence="3" key="1">
    <citation type="journal article" date="2009" name="J. Plant Physiol.">
        <title>Analysis of the soluble cell wall proteome of gymnosperms.</title>
        <authorList>
            <person name="Uzal E.N."/>
            <person name="Gomez-Ros L.V."/>
            <person name="Hernandez J.A."/>
            <person name="Pedreno M.A."/>
            <person name="Cuello J."/>
            <person name="Ros Barcelo A."/>
        </authorList>
    </citation>
    <scope>PROTEIN SEQUENCE</scope>
    <scope>SUBCELLULAR LOCATION</scope>
    <source>
        <strain evidence="1">PC-61</strain>
        <tissue evidence="1">Callus</tissue>
    </source>
</reference>